<reference key="1">
    <citation type="journal article" date="1999" name="Nature">
        <title>Evidence for lateral gene transfer between Archaea and Bacteria from genome sequence of Thermotoga maritima.</title>
        <authorList>
            <person name="Nelson K.E."/>
            <person name="Clayton R.A."/>
            <person name="Gill S.R."/>
            <person name="Gwinn M.L."/>
            <person name="Dodson R.J."/>
            <person name="Haft D.H."/>
            <person name="Hickey E.K."/>
            <person name="Peterson J.D."/>
            <person name="Nelson W.C."/>
            <person name="Ketchum K.A."/>
            <person name="McDonald L.A."/>
            <person name="Utterback T.R."/>
            <person name="Malek J.A."/>
            <person name="Linher K.D."/>
            <person name="Garrett M.M."/>
            <person name="Stewart A.M."/>
            <person name="Cotton M.D."/>
            <person name="Pratt M.S."/>
            <person name="Phillips C.A."/>
            <person name="Richardson D.L."/>
            <person name="Heidelberg J.F."/>
            <person name="Sutton G.G."/>
            <person name="Fleischmann R.D."/>
            <person name="Eisen J.A."/>
            <person name="White O."/>
            <person name="Salzberg S.L."/>
            <person name="Smith H.O."/>
            <person name="Venter J.C."/>
            <person name="Fraser C.M."/>
        </authorList>
    </citation>
    <scope>NUCLEOTIDE SEQUENCE [LARGE SCALE GENOMIC DNA]</scope>
    <source>
        <strain>ATCC 43589 / DSM 3109 / JCM 10099 / NBRC 100826 / MSB8</strain>
    </source>
</reference>
<reference key="2">
    <citation type="unpublished observations" date="2001-04">
        <authorList>
            <person name="Medigue C."/>
            <person name="Bocs S."/>
        </authorList>
    </citation>
    <scope>IDENTIFICATION</scope>
</reference>
<name>YB5A_THEMA</name>
<organism>
    <name type="scientific">Thermotoga maritima (strain ATCC 43589 / DSM 3109 / JCM 10099 / NBRC 100826 / MSB8)</name>
    <dbReference type="NCBI Taxonomy" id="243274"/>
    <lineage>
        <taxon>Bacteria</taxon>
        <taxon>Thermotogati</taxon>
        <taxon>Thermotogota</taxon>
        <taxon>Thermotogae</taxon>
        <taxon>Thermotogales</taxon>
        <taxon>Thermotogaceae</taxon>
        <taxon>Thermotoga</taxon>
    </lineage>
</organism>
<gene>
    <name type="ordered locus">TM_1158.1</name>
</gene>
<accession>P58009</accession>
<protein>
    <recommendedName>
        <fullName>Uncharacterized protein TM_1158.1</fullName>
    </recommendedName>
</protein>
<proteinExistence type="predicted"/>
<dbReference type="EMBL" id="AE000512">
    <property type="status" value="NOT_ANNOTATED_CDS"/>
    <property type="molecule type" value="Genomic_DNA"/>
</dbReference>
<dbReference type="RefSeq" id="WP_004080218.1">
    <property type="nucleotide sequence ID" value="NC_000853.1"/>
</dbReference>
<dbReference type="SMR" id="P58009"/>
<dbReference type="PaxDb" id="243274-THEMA_08545"/>
<dbReference type="KEGG" id="tmi:THEMA_08545"/>
<dbReference type="KEGG" id="tmw:THMA_1183"/>
<dbReference type="eggNOG" id="COG0010">
    <property type="taxonomic scope" value="Bacteria"/>
</dbReference>
<dbReference type="InParanoid" id="P58009"/>
<dbReference type="Proteomes" id="UP000008183">
    <property type="component" value="Chromosome"/>
</dbReference>
<dbReference type="GO" id="GO:0008783">
    <property type="term" value="F:agmatinase activity"/>
    <property type="evidence" value="ECO:0000318"/>
    <property type="project" value="GO_Central"/>
</dbReference>
<dbReference type="GO" id="GO:0046872">
    <property type="term" value="F:metal ion binding"/>
    <property type="evidence" value="ECO:0007669"/>
    <property type="project" value="InterPro"/>
</dbReference>
<dbReference type="GO" id="GO:0033389">
    <property type="term" value="P:putrescine biosynthetic process from arginine, via agmatine"/>
    <property type="evidence" value="ECO:0000318"/>
    <property type="project" value="GO_Central"/>
</dbReference>
<dbReference type="Gene3D" id="3.40.800.10">
    <property type="entry name" value="Ureohydrolase domain"/>
    <property type="match status" value="1"/>
</dbReference>
<dbReference type="InterPro" id="IPR006035">
    <property type="entry name" value="Ureohydrolase"/>
</dbReference>
<dbReference type="InterPro" id="IPR023696">
    <property type="entry name" value="Ureohydrolase_dom_sf"/>
</dbReference>
<dbReference type="PANTHER" id="PTHR11358:SF41">
    <property type="entry name" value="ARGINASE"/>
    <property type="match status" value="1"/>
</dbReference>
<dbReference type="PANTHER" id="PTHR11358">
    <property type="entry name" value="ARGINASE/AGMATINASE"/>
    <property type="match status" value="1"/>
</dbReference>
<dbReference type="Pfam" id="PF00491">
    <property type="entry name" value="Arginase"/>
    <property type="match status" value="1"/>
</dbReference>
<dbReference type="SUPFAM" id="SSF52768">
    <property type="entry name" value="Arginase/deacetylase"/>
    <property type="match status" value="1"/>
</dbReference>
<sequence length="240" mass="27773">MIPPHIHILDFNGIYEEQRILKSLAEFVFSKKIEGIRYMVLPEKIPEIENILPSHLGVTFLGDGEFHHLTYFIIKKIKRPFVLVVFDNHLDAREEEFLTCDSWIRKALKLKHLVKVVVVGTQEQEKIHRVFYSETDPQKILKLLGRHPVYLSIDKDVLDIGITGWESGRVSLEDLLNVLRHIPLRKILGADICGEPDPLEFWKMQESEKVNLSILSALFFEKLHYVPGSEHLEGKPAHVT</sequence>
<keyword id="KW-1185">Reference proteome</keyword>
<feature type="chain" id="PRO_0000216218" description="Uncharacterized protein TM_1158.1">
    <location>
        <begin position="1"/>
        <end position="240"/>
    </location>
</feature>